<reference key="1">
    <citation type="journal article" date="2008" name="PLoS Genet.">
        <title>Genomic islands in the pathogenic filamentous fungus Aspergillus fumigatus.</title>
        <authorList>
            <person name="Fedorova N.D."/>
            <person name="Khaldi N."/>
            <person name="Joardar V.S."/>
            <person name="Maiti R."/>
            <person name="Amedeo P."/>
            <person name="Anderson M.J."/>
            <person name="Crabtree J."/>
            <person name="Silva J.C."/>
            <person name="Badger J.H."/>
            <person name="Albarraq A."/>
            <person name="Angiuoli S."/>
            <person name="Bussey H."/>
            <person name="Bowyer P."/>
            <person name="Cotty P.J."/>
            <person name="Dyer P.S."/>
            <person name="Egan A."/>
            <person name="Galens K."/>
            <person name="Fraser-Liggett C.M."/>
            <person name="Haas B.J."/>
            <person name="Inman J.M."/>
            <person name="Kent R."/>
            <person name="Lemieux S."/>
            <person name="Malavazi I."/>
            <person name="Orvis J."/>
            <person name="Roemer T."/>
            <person name="Ronning C.M."/>
            <person name="Sundaram J.P."/>
            <person name="Sutton G."/>
            <person name="Turner G."/>
            <person name="Venter J.C."/>
            <person name="White O.R."/>
            <person name="Whitty B.R."/>
            <person name="Youngman P."/>
            <person name="Wolfe K.H."/>
            <person name="Goldman G.H."/>
            <person name="Wortman J.R."/>
            <person name="Jiang B."/>
            <person name="Denning D.W."/>
            <person name="Nierman W.C."/>
        </authorList>
    </citation>
    <scope>NUCLEOTIDE SEQUENCE [LARGE SCALE GENOMIC DNA]</scope>
    <source>
        <strain>ATCC 1007 / CBS 513.65 / DSM 816 / NCTC 3887 / NRRL 1 / QM 1276 / 107</strain>
    </source>
</reference>
<keyword id="KW-0004">4Fe-4S</keyword>
<keyword id="KW-0067">ATP-binding</keyword>
<keyword id="KW-0963">Cytoplasm</keyword>
<keyword id="KW-0408">Iron</keyword>
<keyword id="KW-0411">Iron-sulfur</keyword>
<keyword id="KW-0479">Metal-binding</keyword>
<keyword id="KW-0547">Nucleotide-binding</keyword>
<keyword id="KW-1185">Reference proteome</keyword>
<gene>
    <name type="primary">cfd1</name>
    <name type="ORF">ACLA_001570</name>
</gene>
<protein>
    <recommendedName>
        <fullName evidence="1">Cytosolic Fe-S cluster assembly factor cfd1</fullName>
    </recommendedName>
    <alternativeName>
        <fullName evidence="1">Cytosolic Fe-S cluster-deficient protein 1</fullName>
    </alternativeName>
</protein>
<comment type="function">
    <text evidence="1">Component of the cytosolic iron-sulfur (Fe/S) protein assembly (CIA) machinery. Required for maturation of extramitochondrial Fe-S proteins. The nbp35-cfd1 heterotetramer forms a Fe-S scaffold complex, mediating the de novo assembly of an Fe-S cluster and its transfer to target apoproteins.</text>
</comment>
<comment type="cofactor">
    <cofactor evidence="1">
        <name>[4Fe-4S] cluster</name>
        <dbReference type="ChEBI" id="CHEBI:49883"/>
    </cofactor>
    <text evidence="1">Binds 4 [4Fe-4S] clusters per heterotetramer. Contains two stable clusters in the N-termini of nbp35 and two labile, bridging clusters between subunits of the nbp35-cfd1 heterotetramer.</text>
</comment>
<comment type="subunit">
    <text evidence="1">Heterotetramer of 2 nbp35 and 2 cfd1 chains.</text>
</comment>
<comment type="subcellular location">
    <subcellularLocation>
        <location evidence="1">Cytoplasm</location>
    </subcellularLocation>
</comment>
<comment type="similarity">
    <text evidence="1">Belongs to the Mrp/NBP35 ATP-binding proteins family. NUBP2/CFD1 subfamily.</text>
</comment>
<proteinExistence type="inferred from homology"/>
<dbReference type="EMBL" id="DS027004">
    <property type="protein sequence ID" value="EAW14746.1"/>
    <property type="molecule type" value="Genomic_DNA"/>
</dbReference>
<dbReference type="RefSeq" id="XP_001276172.1">
    <property type="nucleotide sequence ID" value="XM_001276171.1"/>
</dbReference>
<dbReference type="SMR" id="A1C4X8"/>
<dbReference type="STRING" id="344612.A1C4X8"/>
<dbReference type="EnsemblFungi" id="EAW14746">
    <property type="protein sequence ID" value="EAW14746"/>
    <property type="gene ID" value="ACLA_001570"/>
</dbReference>
<dbReference type="GeneID" id="4708655"/>
<dbReference type="KEGG" id="act:ACLA_001570"/>
<dbReference type="VEuPathDB" id="FungiDB:ACLA_001570"/>
<dbReference type="eggNOG" id="KOG3022">
    <property type="taxonomic scope" value="Eukaryota"/>
</dbReference>
<dbReference type="HOGENOM" id="CLU_024839_0_1_1"/>
<dbReference type="OMA" id="WIPVFAD"/>
<dbReference type="OrthoDB" id="3900342at2759"/>
<dbReference type="Proteomes" id="UP000006701">
    <property type="component" value="Unassembled WGS sequence"/>
</dbReference>
<dbReference type="GO" id="GO:1904564">
    <property type="term" value="C:cytosolic [4Fe-4S] assembly scaffold complex"/>
    <property type="evidence" value="ECO:0007669"/>
    <property type="project" value="EnsemblFungi"/>
</dbReference>
<dbReference type="GO" id="GO:0051539">
    <property type="term" value="F:4 iron, 4 sulfur cluster binding"/>
    <property type="evidence" value="ECO:0007669"/>
    <property type="project" value="UniProtKB-UniRule"/>
</dbReference>
<dbReference type="GO" id="GO:0005524">
    <property type="term" value="F:ATP binding"/>
    <property type="evidence" value="ECO:0007669"/>
    <property type="project" value="UniProtKB-KW"/>
</dbReference>
<dbReference type="GO" id="GO:0016887">
    <property type="term" value="F:ATP hydrolysis activity"/>
    <property type="evidence" value="ECO:0007669"/>
    <property type="project" value="EnsemblFungi"/>
</dbReference>
<dbReference type="GO" id="GO:0140663">
    <property type="term" value="F:ATP-dependent FeS chaperone activity"/>
    <property type="evidence" value="ECO:0007669"/>
    <property type="project" value="InterPro"/>
</dbReference>
<dbReference type="GO" id="GO:0046872">
    <property type="term" value="F:metal ion binding"/>
    <property type="evidence" value="ECO:0007669"/>
    <property type="project" value="UniProtKB-KW"/>
</dbReference>
<dbReference type="GO" id="GO:0016226">
    <property type="term" value="P:iron-sulfur cluster assembly"/>
    <property type="evidence" value="ECO:0007669"/>
    <property type="project" value="UniProtKB-UniRule"/>
</dbReference>
<dbReference type="GO" id="GO:0002098">
    <property type="term" value="P:tRNA wobble uridine modification"/>
    <property type="evidence" value="ECO:0007669"/>
    <property type="project" value="EnsemblFungi"/>
</dbReference>
<dbReference type="CDD" id="cd02037">
    <property type="entry name" value="Mrp_NBP35"/>
    <property type="match status" value="1"/>
</dbReference>
<dbReference type="FunFam" id="3.40.50.300:FF:001300">
    <property type="entry name" value="Cytosolic Fe-S cluster assembly factor CFD1"/>
    <property type="match status" value="1"/>
</dbReference>
<dbReference type="Gene3D" id="3.40.50.300">
    <property type="entry name" value="P-loop containing nucleotide triphosphate hydrolases"/>
    <property type="match status" value="1"/>
</dbReference>
<dbReference type="HAMAP" id="MF_02040">
    <property type="entry name" value="Mrp_NBP35"/>
    <property type="match status" value="1"/>
</dbReference>
<dbReference type="HAMAP" id="MF_03039">
    <property type="entry name" value="NUBP2"/>
    <property type="match status" value="1"/>
</dbReference>
<dbReference type="InterPro" id="IPR019591">
    <property type="entry name" value="Mrp/NBP35_ATP-bd"/>
</dbReference>
<dbReference type="InterPro" id="IPR028600">
    <property type="entry name" value="NUBP2/Cfd1_eukaryotes"/>
</dbReference>
<dbReference type="InterPro" id="IPR027417">
    <property type="entry name" value="P-loop_NTPase"/>
</dbReference>
<dbReference type="InterPro" id="IPR033756">
    <property type="entry name" value="YlxH/NBP35"/>
</dbReference>
<dbReference type="PANTHER" id="PTHR23264:SF19">
    <property type="entry name" value="CYTOSOLIC FE-S CLUSTER ASSEMBLY FACTOR NUBP2"/>
    <property type="match status" value="1"/>
</dbReference>
<dbReference type="PANTHER" id="PTHR23264">
    <property type="entry name" value="NUCLEOTIDE-BINDING PROTEIN NBP35 YEAST -RELATED"/>
    <property type="match status" value="1"/>
</dbReference>
<dbReference type="Pfam" id="PF10609">
    <property type="entry name" value="ParA"/>
    <property type="match status" value="1"/>
</dbReference>
<dbReference type="SUPFAM" id="SSF52540">
    <property type="entry name" value="P-loop containing nucleoside triphosphate hydrolases"/>
    <property type="match status" value="1"/>
</dbReference>
<evidence type="ECO:0000255" key="1">
    <source>
        <dbReference type="HAMAP-Rule" id="MF_03039"/>
    </source>
</evidence>
<evidence type="ECO:0000256" key="2">
    <source>
        <dbReference type="SAM" id="MobiDB-lite"/>
    </source>
</evidence>
<accession>A1C4X8</accession>
<organism>
    <name type="scientific">Aspergillus clavatus (strain ATCC 1007 / CBS 513.65 / DSM 816 / NCTC 3887 / NRRL 1 / QM 1276 / 107)</name>
    <dbReference type="NCBI Taxonomy" id="344612"/>
    <lineage>
        <taxon>Eukaryota</taxon>
        <taxon>Fungi</taxon>
        <taxon>Dikarya</taxon>
        <taxon>Ascomycota</taxon>
        <taxon>Pezizomycotina</taxon>
        <taxon>Eurotiomycetes</taxon>
        <taxon>Eurotiomycetidae</taxon>
        <taxon>Eurotiales</taxon>
        <taxon>Aspergillaceae</taxon>
        <taxon>Aspergillus</taxon>
        <taxon>Aspergillus subgen. Fumigati</taxon>
    </lineage>
</organism>
<feature type="chain" id="PRO_0000278869" description="Cytosolic Fe-S cluster assembly factor cfd1">
    <location>
        <begin position="1"/>
        <end position="315"/>
    </location>
</feature>
<feature type="region of interest" description="Disordered" evidence="2">
    <location>
        <begin position="256"/>
        <end position="283"/>
    </location>
</feature>
<feature type="binding site" evidence="1">
    <location>
        <begin position="15"/>
        <end position="22"/>
    </location>
    <ligand>
        <name>ATP</name>
        <dbReference type="ChEBI" id="CHEBI:30616"/>
    </ligand>
</feature>
<feature type="binding site" evidence="1">
    <location>
        <position position="212"/>
    </location>
    <ligand>
        <name>[4Fe-4S] cluster</name>
        <dbReference type="ChEBI" id="CHEBI:49883"/>
        <note>ligand shared between dimeric partners</note>
    </ligand>
</feature>
<feature type="binding site" evidence="1">
    <location>
        <position position="215"/>
    </location>
    <ligand>
        <name>[4Fe-4S] cluster</name>
        <dbReference type="ChEBI" id="CHEBI:49883"/>
        <note>ligand shared between dimeric partners</note>
    </ligand>
</feature>
<name>CFD1_ASPCL</name>
<sequence>MPLDGVKNIVLVLSGKGGVGKSSVTLQLALALSLQGKSVGILDIDLTGPSIPRLVGLEDAKITQAPGGWIPVPVHTAQNPSSTTQPRGSLRCMSLGFLLRDRGDAVIWRGPKKTAMIRQFLSDVYWGPTDYLLVDTPPGTSDEHIALAEQLLTLASTDPSATAAGLSRLAGAVLVTTPQAIATSDVRKEANFCVKTKIPVLGVIENMSGYSCPCCGEVSNLFSSGGGKVMADELGIKFLGSVPVDVKFGELVEGKVVDDSDSDEEEGATQAQQQEEPVDDRPLVERYKDCWSHSRFEEFAKTLISQIEGASPASG</sequence>